<dbReference type="EMBL" id="BX571856">
    <property type="protein sequence ID" value="CAG40858.1"/>
    <property type="molecule type" value="Genomic_DNA"/>
</dbReference>
<dbReference type="RefSeq" id="WP_000623481.1">
    <property type="nucleotide sequence ID" value="NC_002952.2"/>
</dbReference>
<dbReference type="SMR" id="Q6GFR9"/>
<dbReference type="KEGG" id="sar:SAR1867"/>
<dbReference type="HOGENOM" id="CLU_114342_2_3_9"/>
<dbReference type="Proteomes" id="UP000000596">
    <property type="component" value="Chromosome"/>
</dbReference>
<dbReference type="GO" id="GO:0005886">
    <property type="term" value="C:plasma membrane"/>
    <property type="evidence" value="ECO:0007669"/>
    <property type="project" value="UniProtKB-SubCell"/>
</dbReference>
<dbReference type="GO" id="GO:0062054">
    <property type="term" value="F:fluoride channel activity"/>
    <property type="evidence" value="ECO:0007669"/>
    <property type="project" value="UniProtKB-UniRule"/>
</dbReference>
<dbReference type="GO" id="GO:0046872">
    <property type="term" value="F:metal ion binding"/>
    <property type="evidence" value="ECO:0007669"/>
    <property type="project" value="UniProtKB-KW"/>
</dbReference>
<dbReference type="GO" id="GO:0140114">
    <property type="term" value="P:cellular detoxification of fluoride"/>
    <property type="evidence" value="ECO:0007669"/>
    <property type="project" value="UniProtKB-UniRule"/>
</dbReference>
<dbReference type="HAMAP" id="MF_00454">
    <property type="entry name" value="FluC"/>
    <property type="match status" value="1"/>
</dbReference>
<dbReference type="InterPro" id="IPR003691">
    <property type="entry name" value="FluC"/>
</dbReference>
<dbReference type="PANTHER" id="PTHR28259">
    <property type="entry name" value="FLUORIDE EXPORT PROTEIN 1-RELATED"/>
    <property type="match status" value="1"/>
</dbReference>
<dbReference type="PANTHER" id="PTHR28259:SF16">
    <property type="entry name" value="FLUORIDE-SPECIFIC ION CHANNEL FLUC 2"/>
    <property type="match status" value="1"/>
</dbReference>
<dbReference type="Pfam" id="PF02537">
    <property type="entry name" value="CRCB"/>
    <property type="match status" value="1"/>
</dbReference>
<feature type="chain" id="PRO_0000110180" description="Fluoride-specific ion channel FluC 2">
    <location>
        <begin position="1"/>
        <end position="117"/>
    </location>
</feature>
<feature type="transmembrane region" description="Helical" evidence="1">
    <location>
        <begin position="1"/>
        <end position="21"/>
    </location>
</feature>
<feature type="transmembrane region" description="Helical" evidence="1">
    <location>
        <begin position="46"/>
        <end position="66"/>
    </location>
</feature>
<feature type="transmembrane region" description="Helical" evidence="1">
    <location>
        <begin position="95"/>
        <end position="115"/>
    </location>
</feature>
<feature type="binding site" evidence="1">
    <location>
        <position position="71"/>
    </location>
    <ligand>
        <name>Na(+)</name>
        <dbReference type="ChEBI" id="CHEBI:29101"/>
        <note>structural</note>
    </ligand>
</feature>
<feature type="binding site" evidence="1">
    <location>
        <position position="74"/>
    </location>
    <ligand>
        <name>Na(+)</name>
        <dbReference type="ChEBI" id="CHEBI:29101"/>
        <note>structural</note>
    </ligand>
</feature>
<gene>
    <name evidence="1" type="primary">fluC2</name>
    <name evidence="1" type="synonym">crcB2</name>
    <name type="ordered locus">SAR1867</name>
</gene>
<comment type="function">
    <text evidence="1">Fluoride-specific ion channel. Important for reducing fluoride concentration in the cell, thus reducing its toxicity.</text>
</comment>
<comment type="catalytic activity">
    <reaction evidence="1">
        <text>fluoride(in) = fluoride(out)</text>
        <dbReference type="Rhea" id="RHEA:76159"/>
        <dbReference type="ChEBI" id="CHEBI:17051"/>
    </reaction>
    <physiologicalReaction direction="left-to-right" evidence="1">
        <dbReference type="Rhea" id="RHEA:76160"/>
    </physiologicalReaction>
</comment>
<comment type="activity regulation">
    <text evidence="1">Na(+) is not transported, but it plays an essential structural role and its presence is essential for fluoride channel function.</text>
</comment>
<comment type="subcellular location">
    <subcellularLocation>
        <location evidence="1">Cell membrane</location>
        <topology evidence="1">Multi-pass membrane protein</topology>
    </subcellularLocation>
</comment>
<comment type="similarity">
    <text evidence="1">Belongs to the fluoride channel Fluc/FEX (TC 1.A.43) family.</text>
</comment>
<keyword id="KW-1003">Cell membrane</keyword>
<keyword id="KW-0407">Ion channel</keyword>
<keyword id="KW-0406">Ion transport</keyword>
<keyword id="KW-0472">Membrane</keyword>
<keyword id="KW-0479">Metal-binding</keyword>
<keyword id="KW-0915">Sodium</keyword>
<keyword id="KW-0812">Transmembrane</keyword>
<keyword id="KW-1133">Transmembrane helix</keyword>
<keyword id="KW-0813">Transport</keyword>
<name>FLUC2_STAAR</name>
<proteinExistence type="inferred from homology"/>
<reference key="1">
    <citation type="journal article" date="2004" name="Proc. Natl. Acad. Sci. U.S.A.">
        <title>Complete genomes of two clinical Staphylococcus aureus strains: evidence for the rapid evolution of virulence and drug resistance.</title>
        <authorList>
            <person name="Holden M.T.G."/>
            <person name="Feil E.J."/>
            <person name="Lindsay J.A."/>
            <person name="Peacock S.J."/>
            <person name="Day N.P.J."/>
            <person name="Enright M.C."/>
            <person name="Foster T.J."/>
            <person name="Moore C.E."/>
            <person name="Hurst L."/>
            <person name="Atkin R."/>
            <person name="Barron A."/>
            <person name="Bason N."/>
            <person name="Bentley S.D."/>
            <person name="Chillingworth C."/>
            <person name="Chillingworth T."/>
            <person name="Churcher C."/>
            <person name="Clark L."/>
            <person name="Corton C."/>
            <person name="Cronin A."/>
            <person name="Doggett J."/>
            <person name="Dowd L."/>
            <person name="Feltwell T."/>
            <person name="Hance Z."/>
            <person name="Harris B."/>
            <person name="Hauser H."/>
            <person name="Holroyd S."/>
            <person name="Jagels K."/>
            <person name="James K.D."/>
            <person name="Lennard N."/>
            <person name="Line A."/>
            <person name="Mayes R."/>
            <person name="Moule S."/>
            <person name="Mungall K."/>
            <person name="Ormond D."/>
            <person name="Quail M.A."/>
            <person name="Rabbinowitsch E."/>
            <person name="Rutherford K.M."/>
            <person name="Sanders M."/>
            <person name="Sharp S."/>
            <person name="Simmonds M."/>
            <person name="Stevens K."/>
            <person name="Whitehead S."/>
            <person name="Barrell B.G."/>
            <person name="Spratt B.G."/>
            <person name="Parkhill J."/>
        </authorList>
    </citation>
    <scope>NUCLEOTIDE SEQUENCE [LARGE SCALE GENOMIC DNA]</scope>
    <source>
        <strain>MRSA252</strain>
    </source>
</reference>
<accession>Q6GFR9</accession>
<protein>
    <recommendedName>
        <fullName evidence="1">Fluoride-specific ion channel FluC 2</fullName>
    </recommendedName>
</protein>
<evidence type="ECO:0000255" key="1">
    <source>
        <dbReference type="HAMAP-Rule" id="MF_00454"/>
    </source>
</evidence>
<organism>
    <name type="scientific">Staphylococcus aureus (strain MRSA252)</name>
    <dbReference type="NCBI Taxonomy" id="282458"/>
    <lineage>
        <taxon>Bacteria</taxon>
        <taxon>Bacillati</taxon>
        <taxon>Bacillota</taxon>
        <taxon>Bacilli</taxon>
        <taxon>Bacillales</taxon>
        <taxon>Staphylococcaceae</taxon>
        <taxon>Staphylococcus</taxon>
    </lineage>
</organism>
<sequence>MISIILVMIGGGLGAIARSAITDYFNHKFTSKLPIATLIVNLVGSFLIGLTIGLSISISWFPAFFVTGFLGGLTTFSTLAKELTLMMTPKFNINLFLNYSLLQFIIGFIACYIGYHI</sequence>